<evidence type="ECO:0000255" key="1">
    <source>
        <dbReference type="HAMAP-Rule" id="MF_01569"/>
    </source>
</evidence>
<protein>
    <recommendedName>
        <fullName evidence="1">Proline--tRNA ligase</fullName>
        <ecNumber evidence="1">6.1.1.15</ecNumber>
    </recommendedName>
    <alternativeName>
        <fullName evidence="1">Prolyl-tRNA synthetase</fullName>
        <shortName evidence="1">ProRS</shortName>
    </alternativeName>
</protein>
<sequence length="588" mass="64332">MITRLSTLFLRTLREDPADAEVPSHKLLVRAGYIRRVAPGIYSWLPLGLRAVRNIEAVVREEMDAIGGQELLFPALLPREPYETTQRWTEYGDSLFRLKDRKGADYLLGPTHEEMFAATVKDLYNSYKDFPVTLYQIQTKYRDEERPRAGVLRGREFVMKDSYSFDISDAGLDESYAKHRAAYQRIFDRLGLEYAICQATSGAMGGSASEEFLAVSENGEDTFVRSTSGNYAANVEAVVTQPGVERDIEGLPEAVTYETPVSETIDALVDWANSIDVQIEGREVTAADTLKCIVVKVREPGAEEAELTGILLPGDREVDMKRLEASLEPAEVELAVESDFADNPFLVKGYVGPVGLAKNGVKVLADPRVVTGTSWITGADEKERHVVGLVAGRDFTPDGFIEAAEIKEGDPAPAGEGTLTLARGIEIGHIFQLGRKYTEAFDVQILDENGKRAIPTMGSYGLGVTRLLAVLAEQRHDDAGLNWSVEVAPYQVHVVAANKDAAAIEAAERFAAELSAAGLDVLFDDRPKVSPGVKFKDAELLGMPFALILGRGYAEGKVELRVRGGEKSELDADQAVAQIVEMVAQARN</sequence>
<feature type="chain" id="PRO_0000248678" description="Proline--tRNA ligase">
    <location>
        <begin position="1"/>
        <end position="588"/>
    </location>
</feature>
<gene>
    <name evidence="1" type="primary">proS</name>
    <name type="ordered locus">Cgl1994</name>
    <name type="ordered locus">cg2185</name>
</gene>
<proteinExistence type="inferred from homology"/>
<comment type="function">
    <text evidence="1">Catalyzes the attachment of proline to tRNA(Pro) in a two-step reaction: proline is first activated by ATP to form Pro-AMP and then transferred to the acceptor end of tRNA(Pro). As ProRS can inadvertently accommodate and process non-cognate amino acids such as alanine and cysteine, to avoid such errors it has two additional distinct editing activities against alanine. One activity is designated as 'pretransfer' editing and involves the tRNA(Pro)-independent hydrolysis of activated Ala-AMP. The other activity is designated 'posttransfer' editing and involves deacylation of mischarged Ala-tRNA(Pro). The misacylated Cys-tRNA(Pro) is not edited by ProRS.</text>
</comment>
<comment type="catalytic activity">
    <reaction evidence="1">
        <text>tRNA(Pro) + L-proline + ATP = L-prolyl-tRNA(Pro) + AMP + diphosphate</text>
        <dbReference type="Rhea" id="RHEA:14305"/>
        <dbReference type="Rhea" id="RHEA-COMP:9700"/>
        <dbReference type="Rhea" id="RHEA-COMP:9702"/>
        <dbReference type="ChEBI" id="CHEBI:30616"/>
        <dbReference type="ChEBI" id="CHEBI:33019"/>
        <dbReference type="ChEBI" id="CHEBI:60039"/>
        <dbReference type="ChEBI" id="CHEBI:78442"/>
        <dbReference type="ChEBI" id="CHEBI:78532"/>
        <dbReference type="ChEBI" id="CHEBI:456215"/>
        <dbReference type="EC" id="6.1.1.15"/>
    </reaction>
</comment>
<comment type="subunit">
    <text evidence="1">Homodimer.</text>
</comment>
<comment type="subcellular location">
    <subcellularLocation>
        <location evidence="1">Cytoplasm</location>
    </subcellularLocation>
</comment>
<comment type="domain">
    <text evidence="1">Consists of three domains: the N-terminal catalytic domain, the editing domain and the C-terminal anticodon-binding domain.</text>
</comment>
<comment type="similarity">
    <text evidence="1">Belongs to the class-II aminoacyl-tRNA synthetase family. ProS type 1 subfamily.</text>
</comment>
<accession>Q8NP31</accession>
<accession>Q6M447</accession>
<keyword id="KW-0030">Aminoacyl-tRNA synthetase</keyword>
<keyword id="KW-0067">ATP-binding</keyword>
<keyword id="KW-0963">Cytoplasm</keyword>
<keyword id="KW-0436">Ligase</keyword>
<keyword id="KW-0547">Nucleotide-binding</keyword>
<keyword id="KW-0648">Protein biosynthesis</keyword>
<keyword id="KW-1185">Reference proteome</keyword>
<organism>
    <name type="scientific">Corynebacterium glutamicum (strain ATCC 13032 / DSM 20300 / JCM 1318 / BCRC 11384 / CCUG 27702 / LMG 3730 / NBRC 12168 / NCIMB 10025 / NRRL B-2784 / 534)</name>
    <dbReference type="NCBI Taxonomy" id="196627"/>
    <lineage>
        <taxon>Bacteria</taxon>
        <taxon>Bacillati</taxon>
        <taxon>Actinomycetota</taxon>
        <taxon>Actinomycetes</taxon>
        <taxon>Mycobacteriales</taxon>
        <taxon>Corynebacteriaceae</taxon>
        <taxon>Corynebacterium</taxon>
    </lineage>
</organism>
<name>SYP_CORGL</name>
<dbReference type="EC" id="6.1.1.15" evidence="1"/>
<dbReference type="EMBL" id="BA000036">
    <property type="protein sequence ID" value="BAB99387.1"/>
    <property type="molecule type" value="Genomic_DNA"/>
</dbReference>
<dbReference type="EMBL" id="BX927153">
    <property type="protein sequence ID" value="CAF20335.1"/>
    <property type="molecule type" value="Genomic_DNA"/>
</dbReference>
<dbReference type="RefSeq" id="NP_601200.1">
    <property type="nucleotide sequence ID" value="NC_003450.3"/>
</dbReference>
<dbReference type="RefSeq" id="WP_003857500.1">
    <property type="nucleotide sequence ID" value="NC_006958.1"/>
</dbReference>
<dbReference type="SMR" id="Q8NP31"/>
<dbReference type="STRING" id="196627.cg2185"/>
<dbReference type="KEGG" id="cgb:cg2185"/>
<dbReference type="KEGG" id="cgl:Cgl1994"/>
<dbReference type="PATRIC" id="fig|196627.13.peg.1933"/>
<dbReference type="eggNOG" id="COG0442">
    <property type="taxonomic scope" value="Bacteria"/>
</dbReference>
<dbReference type="HOGENOM" id="CLU_016739_0_0_11"/>
<dbReference type="OrthoDB" id="9809052at2"/>
<dbReference type="BioCyc" id="CORYNE:G18NG-11586-MONOMER"/>
<dbReference type="Proteomes" id="UP000000582">
    <property type="component" value="Chromosome"/>
</dbReference>
<dbReference type="Proteomes" id="UP000001009">
    <property type="component" value="Chromosome"/>
</dbReference>
<dbReference type="GO" id="GO:0005829">
    <property type="term" value="C:cytosol"/>
    <property type="evidence" value="ECO:0007669"/>
    <property type="project" value="TreeGrafter"/>
</dbReference>
<dbReference type="GO" id="GO:0002161">
    <property type="term" value="F:aminoacyl-tRNA deacylase activity"/>
    <property type="evidence" value="ECO:0007669"/>
    <property type="project" value="InterPro"/>
</dbReference>
<dbReference type="GO" id="GO:0005524">
    <property type="term" value="F:ATP binding"/>
    <property type="evidence" value="ECO:0007669"/>
    <property type="project" value="UniProtKB-UniRule"/>
</dbReference>
<dbReference type="GO" id="GO:0004827">
    <property type="term" value="F:proline-tRNA ligase activity"/>
    <property type="evidence" value="ECO:0007669"/>
    <property type="project" value="UniProtKB-UniRule"/>
</dbReference>
<dbReference type="GO" id="GO:0006433">
    <property type="term" value="P:prolyl-tRNA aminoacylation"/>
    <property type="evidence" value="ECO:0007669"/>
    <property type="project" value="UniProtKB-UniRule"/>
</dbReference>
<dbReference type="CDD" id="cd00861">
    <property type="entry name" value="ProRS_anticodon_short"/>
    <property type="match status" value="1"/>
</dbReference>
<dbReference type="CDD" id="cd00779">
    <property type="entry name" value="ProRS_core_prok"/>
    <property type="match status" value="1"/>
</dbReference>
<dbReference type="FunFam" id="3.30.930.10:FF:000065">
    <property type="entry name" value="Proline--tRNA ligase"/>
    <property type="match status" value="1"/>
</dbReference>
<dbReference type="FunFam" id="3.30.930.10:FF:000070">
    <property type="entry name" value="Proline--tRNA ligase"/>
    <property type="match status" value="1"/>
</dbReference>
<dbReference type="Gene3D" id="3.40.50.800">
    <property type="entry name" value="Anticodon-binding domain"/>
    <property type="match status" value="1"/>
</dbReference>
<dbReference type="Gene3D" id="3.30.930.10">
    <property type="entry name" value="Bira Bifunctional Protein, Domain 2"/>
    <property type="match status" value="2"/>
</dbReference>
<dbReference type="Gene3D" id="3.90.960.10">
    <property type="entry name" value="YbaK/aminoacyl-tRNA synthetase-associated domain"/>
    <property type="match status" value="1"/>
</dbReference>
<dbReference type="HAMAP" id="MF_01569">
    <property type="entry name" value="Pro_tRNA_synth_type1"/>
    <property type="match status" value="1"/>
</dbReference>
<dbReference type="InterPro" id="IPR002314">
    <property type="entry name" value="aa-tRNA-synt_IIb"/>
</dbReference>
<dbReference type="InterPro" id="IPR006195">
    <property type="entry name" value="aa-tRNA-synth_II"/>
</dbReference>
<dbReference type="InterPro" id="IPR045864">
    <property type="entry name" value="aa-tRNA-synth_II/BPL/LPL"/>
</dbReference>
<dbReference type="InterPro" id="IPR004154">
    <property type="entry name" value="Anticodon-bd"/>
</dbReference>
<dbReference type="InterPro" id="IPR036621">
    <property type="entry name" value="Anticodon-bd_dom_sf"/>
</dbReference>
<dbReference type="InterPro" id="IPR002316">
    <property type="entry name" value="Pro-tRNA-ligase_IIa"/>
</dbReference>
<dbReference type="InterPro" id="IPR004500">
    <property type="entry name" value="Pro-tRNA-synth_IIa_bac-type"/>
</dbReference>
<dbReference type="InterPro" id="IPR023717">
    <property type="entry name" value="Pro-tRNA-Synthase_IIa_type1"/>
</dbReference>
<dbReference type="InterPro" id="IPR050062">
    <property type="entry name" value="Pro-tRNA_synthetase"/>
</dbReference>
<dbReference type="InterPro" id="IPR044140">
    <property type="entry name" value="ProRS_anticodon_short"/>
</dbReference>
<dbReference type="InterPro" id="IPR033730">
    <property type="entry name" value="ProRS_core_prok"/>
</dbReference>
<dbReference type="InterPro" id="IPR036754">
    <property type="entry name" value="YbaK/aa-tRNA-synt-asso_dom_sf"/>
</dbReference>
<dbReference type="InterPro" id="IPR007214">
    <property type="entry name" value="YbaK/aa-tRNA-synth-assoc-dom"/>
</dbReference>
<dbReference type="NCBIfam" id="NF006625">
    <property type="entry name" value="PRK09194.1"/>
    <property type="match status" value="1"/>
</dbReference>
<dbReference type="NCBIfam" id="TIGR00409">
    <property type="entry name" value="proS_fam_II"/>
    <property type="match status" value="1"/>
</dbReference>
<dbReference type="PANTHER" id="PTHR42753">
    <property type="entry name" value="MITOCHONDRIAL RIBOSOME PROTEIN L39/PROLYL-TRNA LIGASE FAMILY MEMBER"/>
    <property type="match status" value="1"/>
</dbReference>
<dbReference type="PANTHER" id="PTHR42753:SF2">
    <property type="entry name" value="PROLINE--TRNA LIGASE"/>
    <property type="match status" value="1"/>
</dbReference>
<dbReference type="Pfam" id="PF03129">
    <property type="entry name" value="HGTP_anticodon"/>
    <property type="match status" value="1"/>
</dbReference>
<dbReference type="Pfam" id="PF00587">
    <property type="entry name" value="tRNA-synt_2b"/>
    <property type="match status" value="1"/>
</dbReference>
<dbReference type="Pfam" id="PF04073">
    <property type="entry name" value="tRNA_edit"/>
    <property type="match status" value="1"/>
</dbReference>
<dbReference type="PRINTS" id="PR01046">
    <property type="entry name" value="TRNASYNTHPRO"/>
</dbReference>
<dbReference type="SUPFAM" id="SSF52954">
    <property type="entry name" value="Class II aaRS ABD-related"/>
    <property type="match status" value="1"/>
</dbReference>
<dbReference type="SUPFAM" id="SSF55681">
    <property type="entry name" value="Class II aaRS and biotin synthetases"/>
    <property type="match status" value="1"/>
</dbReference>
<dbReference type="SUPFAM" id="SSF55826">
    <property type="entry name" value="YbaK/ProRS associated domain"/>
    <property type="match status" value="1"/>
</dbReference>
<dbReference type="PROSITE" id="PS50862">
    <property type="entry name" value="AA_TRNA_LIGASE_II"/>
    <property type="match status" value="1"/>
</dbReference>
<reference key="1">
    <citation type="journal article" date="2003" name="Appl. Microbiol. Biotechnol.">
        <title>The Corynebacterium glutamicum genome: features and impacts on biotechnological processes.</title>
        <authorList>
            <person name="Ikeda M."/>
            <person name="Nakagawa S."/>
        </authorList>
    </citation>
    <scope>NUCLEOTIDE SEQUENCE [LARGE SCALE GENOMIC DNA]</scope>
    <source>
        <strain>ATCC 13032 / DSM 20300 / JCM 1318 / BCRC 11384 / CCUG 27702 / LMG 3730 / NBRC 12168 / NCIMB 10025 / NRRL B-2784 / 534</strain>
    </source>
</reference>
<reference key="2">
    <citation type="journal article" date="2003" name="J. Biotechnol.">
        <title>The complete Corynebacterium glutamicum ATCC 13032 genome sequence and its impact on the production of L-aspartate-derived amino acids and vitamins.</title>
        <authorList>
            <person name="Kalinowski J."/>
            <person name="Bathe B."/>
            <person name="Bartels D."/>
            <person name="Bischoff N."/>
            <person name="Bott M."/>
            <person name="Burkovski A."/>
            <person name="Dusch N."/>
            <person name="Eggeling L."/>
            <person name="Eikmanns B.J."/>
            <person name="Gaigalat L."/>
            <person name="Goesmann A."/>
            <person name="Hartmann M."/>
            <person name="Huthmacher K."/>
            <person name="Kraemer R."/>
            <person name="Linke B."/>
            <person name="McHardy A.C."/>
            <person name="Meyer F."/>
            <person name="Moeckel B."/>
            <person name="Pfefferle W."/>
            <person name="Puehler A."/>
            <person name="Rey D.A."/>
            <person name="Rueckert C."/>
            <person name="Rupp O."/>
            <person name="Sahm H."/>
            <person name="Wendisch V.F."/>
            <person name="Wiegraebe I."/>
            <person name="Tauch A."/>
        </authorList>
    </citation>
    <scope>NUCLEOTIDE SEQUENCE [LARGE SCALE GENOMIC DNA]</scope>
    <source>
        <strain>ATCC 13032 / DSM 20300 / JCM 1318 / BCRC 11384 / CCUG 27702 / LMG 3730 / NBRC 12168 / NCIMB 10025 / NRRL B-2784 / 534</strain>
    </source>
</reference>